<gene>
    <name evidence="1" type="primary">clpP</name>
    <name type="ordered locus">Swoo_3113</name>
</gene>
<keyword id="KW-0963">Cytoplasm</keyword>
<keyword id="KW-0378">Hydrolase</keyword>
<keyword id="KW-0645">Protease</keyword>
<keyword id="KW-1185">Reference proteome</keyword>
<keyword id="KW-0720">Serine protease</keyword>
<evidence type="ECO:0000255" key="1">
    <source>
        <dbReference type="HAMAP-Rule" id="MF_00444"/>
    </source>
</evidence>
<dbReference type="EC" id="3.4.21.92" evidence="1"/>
<dbReference type="EMBL" id="CP000961">
    <property type="protein sequence ID" value="ACA87384.1"/>
    <property type="molecule type" value="Genomic_DNA"/>
</dbReference>
<dbReference type="RefSeq" id="WP_012325720.1">
    <property type="nucleotide sequence ID" value="NC_010506.1"/>
</dbReference>
<dbReference type="SMR" id="B1KLT7"/>
<dbReference type="STRING" id="392500.Swoo_3113"/>
<dbReference type="MEROPS" id="S14.001"/>
<dbReference type="KEGG" id="swd:Swoo_3113"/>
<dbReference type="eggNOG" id="COG0740">
    <property type="taxonomic scope" value="Bacteria"/>
</dbReference>
<dbReference type="HOGENOM" id="CLU_058707_3_2_6"/>
<dbReference type="Proteomes" id="UP000002168">
    <property type="component" value="Chromosome"/>
</dbReference>
<dbReference type="GO" id="GO:0005737">
    <property type="term" value="C:cytoplasm"/>
    <property type="evidence" value="ECO:0007669"/>
    <property type="project" value="UniProtKB-SubCell"/>
</dbReference>
<dbReference type="GO" id="GO:0009368">
    <property type="term" value="C:endopeptidase Clp complex"/>
    <property type="evidence" value="ECO:0007669"/>
    <property type="project" value="TreeGrafter"/>
</dbReference>
<dbReference type="GO" id="GO:0004176">
    <property type="term" value="F:ATP-dependent peptidase activity"/>
    <property type="evidence" value="ECO:0007669"/>
    <property type="project" value="InterPro"/>
</dbReference>
<dbReference type="GO" id="GO:0051117">
    <property type="term" value="F:ATPase binding"/>
    <property type="evidence" value="ECO:0007669"/>
    <property type="project" value="TreeGrafter"/>
</dbReference>
<dbReference type="GO" id="GO:0004252">
    <property type="term" value="F:serine-type endopeptidase activity"/>
    <property type="evidence" value="ECO:0007669"/>
    <property type="project" value="UniProtKB-UniRule"/>
</dbReference>
<dbReference type="GO" id="GO:0006515">
    <property type="term" value="P:protein quality control for misfolded or incompletely synthesized proteins"/>
    <property type="evidence" value="ECO:0007669"/>
    <property type="project" value="TreeGrafter"/>
</dbReference>
<dbReference type="CDD" id="cd07017">
    <property type="entry name" value="S14_ClpP_2"/>
    <property type="match status" value="1"/>
</dbReference>
<dbReference type="FunFam" id="3.90.226.10:FF:000001">
    <property type="entry name" value="ATP-dependent Clp protease proteolytic subunit"/>
    <property type="match status" value="1"/>
</dbReference>
<dbReference type="Gene3D" id="3.90.226.10">
    <property type="entry name" value="2-enoyl-CoA Hydratase, Chain A, domain 1"/>
    <property type="match status" value="1"/>
</dbReference>
<dbReference type="HAMAP" id="MF_00444">
    <property type="entry name" value="ClpP"/>
    <property type="match status" value="1"/>
</dbReference>
<dbReference type="InterPro" id="IPR001907">
    <property type="entry name" value="ClpP"/>
</dbReference>
<dbReference type="InterPro" id="IPR029045">
    <property type="entry name" value="ClpP/crotonase-like_dom_sf"/>
</dbReference>
<dbReference type="InterPro" id="IPR023562">
    <property type="entry name" value="ClpP/TepA"/>
</dbReference>
<dbReference type="InterPro" id="IPR033135">
    <property type="entry name" value="ClpP_His_AS"/>
</dbReference>
<dbReference type="InterPro" id="IPR018215">
    <property type="entry name" value="ClpP_Ser_AS"/>
</dbReference>
<dbReference type="NCBIfam" id="TIGR00493">
    <property type="entry name" value="clpP"/>
    <property type="match status" value="1"/>
</dbReference>
<dbReference type="NCBIfam" id="NF001368">
    <property type="entry name" value="PRK00277.1"/>
    <property type="match status" value="1"/>
</dbReference>
<dbReference type="NCBIfam" id="NF009205">
    <property type="entry name" value="PRK12553.1"/>
    <property type="match status" value="1"/>
</dbReference>
<dbReference type="PANTHER" id="PTHR10381">
    <property type="entry name" value="ATP-DEPENDENT CLP PROTEASE PROTEOLYTIC SUBUNIT"/>
    <property type="match status" value="1"/>
</dbReference>
<dbReference type="PANTHER" id="PTHR10381:SF70">
    <property type="entry name" value="ATP-DEPENDENT CLP PROTEASE PROTEOLYTIC SUBUNIT"/>
    <property type="match status" value="1"/>
</dbReference>
<dbReference type="Pfam" id="PF00574">
    <property type="entry name" value="CLP_protease"/>
    <property type="match status" value="1"/>
</dbReference>
<dbReference type="PRINTS" id="PR00127">
    <property type="entry name" value="CLPPROTEASEP"/>
</dbReference>
<dbReference type="SUPFAM" id="SSF52096">
    <property type="entry name" value="ClpP/crotonase"/>
    <property type="match status" value="1"/>
</dbReference>
<dbReference type="PROSITE" id="PS00382">
    <property type="entry name" value="CLP_PROTEASE_HIS"/>
    <property type="match status" value="1"/>
</dbReference>
<dbReference type="PROSITE" id="PS00381">
    <property type="entry name" value="CLP_PROTEASE_SER"/>
    <property type="match status" value="1"/>
</dbReference>
<feature type="chain" id="PRO_1000189668" description="ATP-dependent Clp protease proteolytic subunit">
    <location>
        <begin position="1"/>
        <end position="203"/>
    </location>
</feature>
<feature type="active site" description="Nucleophile" evidence="1">
    <location>
        <position position="107"/>
    </location>
</feature>
<feature type="active site" evidence="1">
    <location>
        <position position="132"/>
    </location>
</feature>
<name>CLPP_SHEWM</name>
<reference key="1">
    <citation type="submission" date="2008-02" db="EMBL/GenBank/DDBJ databases">
        <title>Complete sequence of Shewanella woodyi ATCC 51908.</title>
        <authorList>
            <consortium name="US DOE Joint Genome Institute"/>
            <person name="Copeland A."/>
            <person name="Lucas S."/>
            <person name="Lapidus A."/>
            <person name="Glavina del Rio T."/>
            <person name="Dalin E."/>
            <person name="Tice H."/>
            <person name="Bruce D."/>
            <person name="Goodwin L."/>
            <person name="Pitluck S."/>
            <person name="Sims D."/>
            <person name="Brettin T."/>
            <person name="Detter J.C."/>
            <person name="Han C."/>
            <person name="Kuske C.R."/>
            <person name="Schmutz J."/>
            <person name="Larimer F."/>
            <person name="Land M."/>
            <person name="Hauser L."/>
            <person name="Kyrpides N."/>
            <person name="Lykidis A."/>
            <person name="Zhao J.-S."/>
            <person name="Richardson P."/>
        </authorList>
    </citation>
    <scope>NUCLEOTIDE SEQUENCE [LARGE SCALE GENOMIC DNA]</scope>
    <source>
        <strain>ATCC 51908 / MS32</strain>
    </source>
</reference>
<sequence>MQNAPESVLNALVPMVVEQTAKGERSYDIYSRLLKERVIFLVGQVEEHMANLIVAQLLFLESENPDQEISLYINSPGGSVTAGMAIYDTMQFIKPNVSTVCIGQAASMGAFLLAGGAKGKRHCLPNSRVMIHQPLGGFQGQASDFAIHAQEILGIKNKLNNILAEHTGQPLEVIERDTDRDNFMSAAQAAEYGLVDSVFEQRG</sequence>
<organism>
    <name type="scientific">Shewanella woodyi (strain ATCC 51908 / MS32)</name>
    <dbReference type="NCBI Taxonomy" id="392500"/>
    <lineage>
        <taxon>Bacteria</taxon>
        <taxon>Pseudomonadati</taxon>
        <taxon>Pseudomonadota</taxon>
        <taxon>Gammaproteobacteria</taxon>
        <taxon>Alteromonadales</taxon>
        <taxon>Shewanellaceae</taxon>
        <taxon>Shewanella</taxon>
    </lineage>
</organism>
<proteinExistence type="inferred from homology"/>
<accession>B1KLT7</accession>
<protein>
    <recommendedName>
        <fullName evidence="1">ATP-dependent Clp protease proteolytic subunit</fullName>
        <ecNumber evidence="1">3.4.21.92</ecNumber>
    </recommendedName>
    <alternativeName>
        <fullName evidence="1">Endopeptidase Clp</fullName>
    </alternativeName>
</protein>
<comment type="function">
    <text evidence="1">Cleaves peptides in various proteins in a process that requires ATP hydrolysis. Has a chymotrypsin-like activity. Plays a major role in the degradation of misfolded proteins.</text>
</comment>
<comment type="catalytic activity">
    <reaction evidence="1">
        <text>Hydrolysis of proteins to small peptides in the presence of ATP and magnesium. alpha-casein is the usual test substrate. In the absence of ATP, only oligopeptides shorter than five residues are hydrolyzed (such as succinyl-Leu-Tyr-|-NHMec, and Leu-Tyr-Leu-|-Tyr-Trp, in which cleavage of the -Tyr-|-Leu- and -Tyr-|-Trp bonds also occurs).</text>
        <dbReference type="EC" id="3.4.21.92"/>
    </reaction>
</comment>
<comment type="subunit">
    <text evidence="1">Fourteen ClpP subunits assemble into 2 heptameric rings which stack back to back to give a disk-like structure with a central cavity, resembling the structure of eukaryotic proteasomes.</text>
</comment>
<comment type="subcellular location">
    <subcellularLocation>
        <location evidence="1">Cytoplasm</location>
    </subcellularLocation>
</comment>
<comment type="similarity">
    <text evidence="1">Belongs to the peptidase S14 family.</text>
</comment>